<dbReference type="GO" id="GO:0005576">
    <property type="term" value="C:extracellular region"/>
    <property type="evidence" value="ECO:0007669"/>
    <property type="project" value="UniProtKB-KW"/>
</dbReference>
<organism>
    <name type="scientific">Arabidopsis thaliana</name>
    <name type="common">Mouse-ear cress</name>
    <dbReference type="NCBI Taxonomy" id="3702"/>
    <lineage>
        <taxon>Eukaryota</taxon>
        <taxon>Viridiplantae</taxon>
        <taxon>Streptophyta</taxon>
        <taxon>Embryophyta</taxon>
        <taxon>Tracheophyta</taxon>
        <taxon>Spermatophyta</taxon>
        <taxon>Magnoliopsida</taxon>
        <taxon>eudicotyledons</taxon>
        <taxon>Gunneridae</taxon>
        <taxon>Pentapetalae</taxon>
        <taxon>rosids</taxon>
        <taxon>malvids</taxon>
        <taxon>Brassicales</taxon>
        <taxon>Brassicaceae</taxon>
        <taxon>Camelineae</taxon>
        <taxon>Arabidopsis</taxon>
    </lineage>
</organism>
<evidence type="ECO:0000269" key="1">
    <source>
    </source>
</evidence>
<evidence type="ECO:0000303" key="2">
    <source>
    </source>
</evidence>
<evidence type="ECO:0000305" key="3"/>
<sequence>ADRELHRSKA</sequence>
<name>CWP14_ARATH</name>
<keyword id="KW-0134">Cell wall</keyword>
<keyword id="KW-0903">Direct protein sequencing</keyword>
<keyword id="KW-0964">Secreted</keyword>
<protein>
    <recommendedName>
        <fullName>36 kDa cell wall protein</fullName>
    </recommendedName>
</protein>
<reference evidence="3" key="1">
    <citation type="journal article" date="1997" name="J. Biol. Chem.">
        <title>Differential extraction and protein sequencing reveals major differences in patterns of primary cell wall proteins from plants.</title>
        <authorList>
            <person name="Robertson D."/>
            <person name="Mitchell G.P."/>
            <person name="Gilroy J.S."/>
            <person name="Gerrish C."/>
            <person name="Bolwell G.P."/>
            <person name="Slabas A.R."/>
        </authorList>
    </citation>
    <scope>PROTEIN SEQUENCE</scope>
    <scope>SUBCELLULAR LOCATION</scope>
    <source>
        <strain>cv. Landsberg erecta</strain>
    </source>
</reference>
<proteinExistence type="evidence at protein level"/>
<accession>P80836</accession>
<feature type="chain" id="PRO_0000079671" description="36 kDa cell wall protein">
    <location>
        <begin position="1"/>
        <end position="10" status="greater than"/>
    </location>
</feature>
<feature type="non-terminal residue" evidence="2">
    <location>
        <position position="10"/>
    </location>
</feature>
<comment type="subcellular location">
    <subcellularLocation>
        <location evidence="1">Secreted</location>
        <location evidence="1">Cell wall</location>
    </subcellularLocation>
</comment>